<feature type="chain" id="PRO_0000411386" description="Thymidine kinase">
    <location>
        <begin position="1"/>
        <end position="189"/>
    </location>
</feature>
<feature type="active site" description="Proton acceptor" evidence="1">
    <location>
        <position position="86"/>
    </location>
</feature>
<feature type="binding site" evidence="1">
    <location>
        <begin position="9"/>
        <end position="16"/>
    </location>
    <ligand>
        <name>ATP</name>
        <dbReference type="ChEBI" id="CHEBI:30616"/>
    </ligand>
</feature>
<feature type="binding site" evidence="1">
    <location>
        <begin position="85"/>
        <end position="88"/>
    </location>
    <ligand>
        <name>ATP</name>
        <dbReference type="ChEBI" id="CHEBI:30616"/>
    </ligand>
</feature>
<feature type="binding site" evidence="1">
    <location>
        <position position="143"/>
    </location>
    <ligand>
        <name>Zn(2+)</name>
        <dbReference type="ChEBI" id="CHEBI:29105"/>
    </ligand>
</feature>
<feature type="binding site" evidence="1">
    <location>
        <position position="146"/>
    </location>
    <ligand>
        <name>Zn(2+)</name>
        <dbReference type="ChEBI" id="CHEBI:29105"/>
    </ligand>
</feature>
<feature type="binding site" evidence="1">
    <location>
        <position position="180"/>
    </location>
    <ligand>
        <name>Zn(2+)</name>
        <dbReference type="ChEBI" id="CHEBI:29105"/>
    </ligand>
</feature>
<feature type="binding site" evidence="1">
    <location>
        <position position="183"/>
    </location>
    <ligand>
        <name>Zn(2+)</name>
        <dbReference type="ChEBI" id="CHEBI:29105"/>
    </ligand>
</feature>
<name>KITH_STRPQ</name>
<dbReference type="EC" id="2.7.1.21" evidence="1"/>
<dbReference type="EMBL" id="BA000034">
    <property type="protein sequence ID" value="BAC64092.1"/>
    <property type="molecule type" value="Genomic_DNA"/>
</dbReference>
<dbReference type="RefSeq" id="WP_011106764.1">
    <property type="nucleotide sequence ID" value="NC_004606.1"/>
</dbReference>
<dbReference type="SMR" id="P0DB97"/>
<dbReference type="KEGG" id="sps:SPs0997"/>
<dbReference type="HOGENOM" id="CLU_064400_2_2_9"/>
<dbReference type="GO" id="GO:0005829">
    <property type="term" value="C:cytosol"/>
    <property type="evidence" value="ECO:0007669"/>
    <property type="project" value="TreeGrafter"/>
</dbReference>
<dbReference type="GO" id="GO:0005524">
    <property type="term" value="F:ATP binding"/>
    <property type="evidence" value="ECO:0007669"/>
    <property type="project" value="UniProtKB-UniRule"/>
</dbReference>
<dbReference type="GO" id="GO:0004797">
    <property type="term" value="F:thymidine kinase activity"/>
    <property type="evidence" value="ECO:0007669"/>
    <property type="project" value="UniProtKB-UniRule"/>
</dbReference>
<dbReference type="GO" id="GO:0008270">
    <property type="term" value="F:zinc ion binding"/>
    <property type="evidence" value="ECO:0007669"/>
    <property type="project" value="UniProtKB-UniRule"/>
</dbReference>
<dbReference type="GO" id="GO:0071897">
    <property type="term" value="P:DNA biosynthetic process"/>
    <property type="evidence" value="ECO:0007669"/>
    <property type="project" value="UniProtKB-KW"/>
</dbReference>
<dbReference type="GO" id="GO:0046104">
    <property type="term" value="P:thymidine metabolic process"/>
    <property type="evidence" value="ECO:0007669"/>
    <property type="project" value="TreeGrafter"/>
</dbReference>
<dbReference type="Gene3D" id="3.30.60.20">
    <property type="match status" value="1"/>
</dbReference>
<dbReference type="Gene3D" id="3.40.50.300">
    <property type="entry name" value="P-loop containing nucleotide triphosphate hydrolases"/>
    <property type="match status" value="1"/>
</dbReference>
<dbReference type="HAMAP" id="MF_00124">
    <property type="entry name" value="Thymidine_kinase"/>
    <property type="match status" value="1"/>
</dbReference>
<dbReference type="InterPro" id="IPR027417">
    <property type="entry name" value="P-loop_NTPase"/>
</dbReference>
<dbReference type="InterPro" id="IPR001267">
    <property type="entry name" value="Thymidine_kinase"/>
</dbReference>
<dbReference type="InterPro" id="IPR020633">
    <property type="entry name" value="Thymidine_kinase_CS"/>
</dbReference>
<dbReference type="NCBIfam" id="NF003299">
    <property type="entry name" value="PRK04296.1-4"/>
    <property type="match status" value="1"/>
</dbReference>
<dbReference type="NCBIfam" id="NF003300">
    <property type="entry name" value="PRK04296.1-5"/>
    <property type="match status" value="1"/>
</dbReference>
<dbReference type="PANTHER" id="PTHR11441">
    <property type="entry name" value="THYMIDINE KINASE"/>
    <property type="match status" value="1"/>
</dbReference>
<dbReference type="PANTHER" id="PTHR11441:SF0">
    <property type="entry name" value="THYMIDINE KINASE, CYTOSOLIC"/>
    <property type="match status" value="1"/>
</dbReference>
<dbReference type="Pfam" id="PF00265">
    <property type="entry name" value="TK"/>
    <property type="match status" value="1"/>
</dbReference>
<dbReference type="PIRSF" id="PIRSF035805">
    <property type="entry name" value="TK_cell"/>
    <property type="match status" value="1"/>
</dbReference>
<dbReference type="SUPFAM" id="SSF57716">
    <property type="entry name" value="Glucocorticoid receptor-like (DNA-binding domain)"/>
    <property type="match status" value="1"/>
</dbReference>
<dbReference type="SUPFAM" id="SSF52540">
    <property type="entry name" value="P-loop containing nucleoside triphosphate hydrolases"/>
    <property type="match status" value="1"/>
</dbReference>
<dbReference type="PROSITE" id="PS00603">
    <property type="entry name" value="TK_CELLULAR_TYPE"/>
    <property type="match status" value="1"/>
</dbReference>
<organism>
    <name type="scientific">Streptococcus pyogenes serotype M3 (strain SSI-1)</name>
    <dbReference type="NCBI Taxonomy" id="193567"/>
    <lineage>
        <taxon>Bacteria</taxon>
        <taxon>Bacillati</taxon>
        <taxon>Bacillota</taxon>
        <taxon>Bacilli</taxon>
        <taxon>Lactobacillales</taxon>
        <taxon>Streptococcaceae</taxon>
        <taxon>Streptococcus</taxon>
    </lineage>
</organism>
<protein>
    <recommendedName>
        <fullName evidence="1">Thymidine kinase</fullName>
        <ecNumber evidence="1">2.7.1.21</ecNumber>
    </recommendedName>
</protein>
<reference key="1">
    <citation type="journal article" date="2003" name="Genome Res.">
        <title>Genome sequence of an M3 strain of Streptococcus pyogenes reveals a large-scale genomic rearrangement in invasive strains and new insights into phage evolution.</title>
        <authorList>
            <person name="Nakagawa I."/>
            <person name="Kurokawa K."/>
            <person name="Yamashita A."/>
            <person name="Nakata M."/>
            <person name="Tomiyasu Y."/>
            <person name="Okahashi N."/>
            <person name="Kawabata S."/>
            <person name="Yamazaki K."/>
            <person name="Shiba T."/>
            <person name="Yasunaga T."/>
            <person name="Hayashi H."/>
            <person name="Hattori M."/>
            <person name="Hamada S."/>
        </authorList>
    </citation>
    <scope>NUCLEOTIDE SEQUENCE [LARGE SCALE GENOMIC DNA]</scope>
    <source>
        <strain>SSI-1</strain>
    </source>
</reference>
<proteinExistence type="inferred from homology"/>
<gene>
    <name evidence="1" type="primary">tdk</name>
    <name type="ordered locus">SPs0997</name>
</gene>
<evidence type="ECO:0000255" key="1">
    <source>
        <dbReference type="HAMAP-Rule" id="MF_00124"/>
    </source>
</evidence>
<keyword id="KW-0067">ATP-binding</keyword>
<keyword id="KW-0963">Cytoplasm</keyword>
<keyword id="KW-0237">DNA synthesis</keyword>
<keyword id="KW-0418">Kinase</keyword>
<keyword id="KW-0479">Metal-binding</keyword>
<keyword id="KW-0547">Nucleotide-binding</keyword>
<keyword id="KW-0808">Transferase</keyword>
<keyword id="KW-0862">Zinc</keyword>
<accession>P0DB97</accession>
<accession>Q878R8</accession>
<accession>Q8K7I3</accession>
<sequence>MAQLYYKYGTMNSGKTIEILKVAHNYEEQGKPVVIMTSALDTRDGFGIVSSRIGMRREAIPISNDMDIFTFIAQLEEKPYCVLIDESQFLSKQNVYDLARVVDELNVPVMAFGLKNDFQNNLFEGSKHLLLLADKIDEIKTICQYCSKKATMVLRIENGKPVYEGDQIQIGGNETYIPVCRKHYFNPEI</sequence>
<comment type="catalytic activity">
    <reaction evidence="1">
        <text>thymidine + ATP = dTMP + ADP + H(+)</text>
        <dbReference type="Rhea" id="RHEA:19129"/>
        <dbReference type="ChEBI" id="CHEBI:15378"/>
        <dbReference type="ChEBI" id="CHEBI:17748"/>
        <dbReference type="ChEBI" id="CHEBI:30616"/>
        <dbReference type="ChEBI" id="CHEBI:63528"/>
        <dbReference type="ChEBI" id="CHEBI:456216"/>
        <dbReference type="EC" id="2.7.1.21"/>
    </reaction>
</comment>
<comment type="subunit">
    <text evidence="1">Homotetramer.</text>
</comment>
<comment type="subcellular location">
    <subcellularLocation>
        <location evidence="1">Cytoplasm</location>
    </subcellularLocation>
</comment>
<comment type="similarity">
    <text evidence="1">Belongs to the thymidine kinase family.</text>
</comment>